<gene>
    <name evidence="1" type="primary">torD</name>
    <name type="ordered locus">SEN3637</name>
</gene>
<keyword id="KW-0143">Chaperone</keyword>
<keyword id="KW-0963">Cytoplasm</keyword>
<name>TORD_SALEP</name>
<reference key="1">
    <citation type="journal article" date="2008" name="Genome Res.">
        <title>Comparative genome analysis of Salmonella enteritidis PT4 and Salmonella gallinarum 287/91 provides insights into evolutionary and host adaptation pathways.</title>
        <authorList>
            <person name="Thomson N.R."/>
            <person name="Clayton D.J."/>
            <person name="Windhorst D."/>
            <person name="Vernikos G."/>
            <person name="Davidson S."/>
            <person name="Churcher C."/>
            <person name="Quail M.A."/>
            <person name="Stevens M."/>
            <person name="Jones M.A."/>
            <person name="Watson M."/>
            <person name="Barron A."/>
            <person name="Layton A."/>
            <person name="Pickard D."/>
            <person name="Kingsley R.A."/>
            <person name="Bignell A."/>
            <person name="Clark L."/>
            <person name="Harris B."/>
            <person name="Ormond D."/>
            <person name="Abdellah Z."/>
            <person name="Brooks K."/>
            <person name="Cherevach I."/>
            <person name="Chillingworth T."/>
            <person name="Woodward J."/>
            <person name="Norberczak H."/>
            <person name="Lord A."/>
            <person name="Arrowsmith C."/>
            <person name="Jagels K."/>
            <person name="Moule S."/>
            <person name="Mungall K."/>
            <person name="Saunders M."/>
            <person name="Whitehead S."/>
            <person name="Chabalgoity J.A."/>
            <person name="Maskell D."/>
            <person name="Humphreys T."/>
            <person name="Roberts M."/>
            <person name="Barrow P.A."/>
            <person name="Dougan G."/>
            <person name="Parkhill J."/>
        </authorList>
    </citation>
    <scope>NUCLEOTIDE SEQUENCE [LARGE SCALE GENOMIC DNA]</scope>
    <source>
        <strain>P125109</strain>
    </source>
</reference>
<comment type="function">
    <text evidence="1">Involved in the biogenesis of TorA. Acts on TorA before the insertion of the molybdenum cofactor and, as a result, probably favors a conformation of the apoenzyme that is competent for acquiring the cofactor.</text>
</comment>
<comment type="subcellular location">
    <subcellularLocation>
        <location evidence="1">Cytoplasm</location>
    </subcellularLocation>
</comment>
<comment type="similarity">
    <text evidence="1">Belongs to the TorD/DmsD family. TorD subfamily.</text>
</comment>
<feature type="chain" id="PRO_1000137513" description="Chaperone protein TorD">
    <location>
        <begin position="1"/>
        <end position="210"/>
    </location>
</feature>
<accession>B5QUN2</accession>
<protein>
    <recommendedName>
        <fullName evidence="1">Chaperone protein TorD</fullName>
    </recommendedName>
</protein>
<evidence type="ECO:0000255" key="1">
    <source>
        <dbReference type="HAMAP-Rule" id="MF_01150"/>
    </source>
</evidence>
<dbReference type="EMBL" id="AM933172">
    <property type="protein sequence ID" value="CAR35213.1"/>
    <property type="molecule type" value="Genomic_DNA"/>
</dbReference>
<dbReference type="RefSeq" id="WP_000595416.1">
    <property type="nucleotide sequence ID" value="NC_011294.1"/>
</dbReference>
<dbReference type="SMR" id="B5QUN2"/>
<dbReference type="KEGG" id="set:SEN3637"/>
<dbReference type="HOGENOM" id="CLU_077650_4_0_6"/>
<dbReference type="Proteomes" id="UP000000613">
    <property type="component" value="Chromosome"/>
</dbReference>
<dbReference type="GO" id="GO:0005737">
    <property type="term" value="C:cytoplasm"/>
    <property type="evidence" value="ECO:0007669"/>
    <property type="project" value="UniProtKB-SubCell"/>
</dbReference>
<dbReference type="GO" id="GO:0051259">
    <property type="term" value="P:protein complex oligomerization"/>
    <property type="evidence" value="ECO:0007669"/>
    <property type="project" value="InterPro"/>
</dbReference>
<dbReference type="GO" id="GO:0006457">
    <property type="term" value="P:protein folding"/>
    <property type="evidence" value="ECO:0007669"/>
    <property type="project" value="UniProtKB-UniRule"/>
</dbReference>
<dbReference type="Gene3D" id="1.20.120.1820">
    <property type="match status" value="1"/>
</dbReference>
<dbReference type="Gene3D" id="1.20.1280.20">
    <property type="entry name" value="HscB, C-terminal domain"/>
    <property type="match status" value="1"/>
</dbReference>
<dbReference type="HAMAP" id="MF_01150">
    <property type="entry name" value="TorD"/>
    <property type="match status" value="1"/>
</dbReference>
<dbReference type="InterPro" id="IPR023069">
    <property type="entry name" value="Chaperone_TorD"/>
</dbReference>
<dbReference type="InterPro" id="IPR020945">
    <property type="entry name" value="DMSO/NO3_reduct_chaperone"/>
</dbReference>
<dbReference type="InterPro" id="IPR036386">
    <property type="entry name" value="HscB_C_sf"/>
</dbReference>
<dbReference type="InterPro" id="IPR036411">
    <property type="entry name" value="TorD-like_sf"/>
</dbReference>
<dbReference type="InterPro" id="IPR050289">
    <property type="entry name" value="TorD/DmsD_chaperones"/>
</dbReference>
<dbReference type="NCBIfam" id="NF003442">
    <property type="entry name" value="PRK04976.1"/>
    <property type="match status" value="1"/>
</dbReference>
<dbReference type="PANTHER" id="PTHR34227:SF11">
    <property type="entry name" value="CHAPERONE PROTEIN TORD"/>
    <property type="match status" value="1"/>
</dbReference>
<dbReference type="PANTHER" id="PTHR34227">
    <property type="entry name" value="CHAPERONE PROTEIN YCDY"/>
    <property type="match status" value="1"/>
</dbReference>
<dbReference type="Pfam" id="PF02613">
    <property type="entry name" value="Nitrate_red_del"/>
    <property type="match status" value="1"/>
</dbReference>
<dbReference type="SUPFAM" id="SSF89155">
    <property type="entry name" value="TorD-like"/>
    <property type="match status" value="1"/>
</dbReference>
<sequence length="210" mass="23798">MIKQPALAQEQYACVYAWLALLFFREVDDEGLIQLQSAEIADWLALLKRQPALAASVALLEQKIAALSLRQDAQLELAADFCGLFLMTDKKSALPYASQYPQQEPGMIKHLLLEAGMEVNDDFKEPADHLAIYLELLSHLHFSLGESFQQRRMNKLRQKTLSSLLEWLPEFTNNCLKHDPYGFYAALSQLLLAIVRFDDGKEDLSIVAVE</sequence>
<organism>
    <name type="scientific">Salmonella enteritidis PT4 (strain P125109)</name>
    <dbReference type="NCBI Taxonomy" id="550537"/>
    <lineage>
        <taxon>Bacteria</taxon>
        <taxon>Pseudomonadati</taxon>
        <taxon>Pseudomonadota</taxon>
        <taxon>Gammaproteobacteria</taxon>
        <taxon>Enterobacterales</taxon>
        <taxon>Enterobacteriaceae</taxon>
        <taxon>Salmonella</taxon>
    </lineage>
</organism>
<proteinExistence type="inferred from homology"/>